<feature type="chain" id="PRO_1000140883" description="Small ribosomal subunit protein uS5">
    <location>
        <begin position="1"/>
        <end position="166"/>
    </location>
</feature>
<feature type="domain" description="S5 DRBM" evidence="1">
    <location>
        <begin position="12"/>
        <end position="75"/>
    </location>
</feature>
<gene>
    <name evidence="1" type="primary">rpsE</name>
    <name type="ordered locus">PLES_06821</name>
</gene>
<comment type="function">
    <text evidence="1">With S4 and S12 plays an important role in translational accuracy.</text>
</comment>
<comment type="function">
    <text evidence="1">Located at the back of the 30S subunit body where it stabilizes the conformation of the head with respect to the body.</text>
</comment>
<comment type="subunit">
    <text evidence="1">Part of the 30S ribosomal subunit. Contacts proteins S4 and S8.</text>
</comment>
<comment type="domain">
    <text>The N-terminal domain interacts with the head of the 30S subunit; the C-terminal domain interacts with the body and contacts protein S4. The interaction surface between S4 and S5 is involved in control of translational fidelity.</text>
</comment>
<comment type="similarity">
    <text evidence="1">Belongs to the universal ribosomal protein uS5 family.</text>
</comment>
<accession>B7V661</accession>
<protein>
    <recommendedName>
        <fullName evidence="1">Small ribosomal subunit protein uS5</fullName>
    </recommendedName>
    <alternativeName>
        <fullName evidence="2">30S ribosomal protein S5</fullName>
    </alternativeName>
</protein>
<keyword id="KW-0687">Ribonucleoprotein</keyword>
<keyword id="KW-0689">Ribosomal protein</keyword>
<keyword id="KW-0694">RNA-binding</keyword>
<keyword id="KW-0699">rRNA-binding</keyword>
<evidence type="ECO:0000255" key="1">
    <source>
        <dbReference type="HAMAP-Rule" id="MF_01307"/>
    </source>
</evidence>
<evidence type="ECO:0000305" key="2"/>
<dbReference type="EMBL" id="FM209186">
    <property type="protein sequence ID" value="CAW25409.1"/>
    <property type="molecule type" value="Genomic_DNA"/>
</dbReference>
<dbReference type="RefSeq" id="WP_003093697.1">
    <property type="nucleotide sequence ID" value="NC_011770.1"/>
</dbReference>
<dbReference type="SMR" id="B7V661"/>
<dbReference type="GeneID" id="77219215"/>
<dbReference type="KEGG" id="pag:PLES_06821"/>
<dbReference type="HOGENOM" id="CLU_065898_2_2_6"/>
<dbReference type="GO" id="GO:0015935">
    <property type="term" value="C:small ribosomal subunit"/>
    <property type="evidence" value="ECO:0007669"/>
    <property type="project" value="InterPro"/>
</dbReference>
<dbReference type="GO" id="GO:0019843">
    <property type="term" value="F:rRNA binding"/>
    <property type="evidence" value="ECO:0007669"/>
    <property type="project" value="UniProtKB-UniRule"/>
</dbReference>
<dbReference type="GO" id="GO:0003735">
    <property type="term" value="F:structural constituent of ribosome"/>
    <property type="evidence" value="ECO:0007669"/>
    <property type="project" value="InterPro"/>
</dbReference>
<dbReference type="GO" id="GO:0006412">
    <property type="term" value="P:translation"/>
    <property type="evidence" value="ECO:0007669"/>
    <property type="project" value="UniProtKB-UniRule"/>
</dbReference>
<dbReference type="FunFam" id="3.30.160.20:FF:000001">
    <property type="entry name" value="30S ribosomal protein S5"/>
    <property type="match status" value="1"/>
</dbReference>
<dbReference type="FunFam" id="3.30.230.10:FF:000002">
    <property type="entry name" value="30S ribosomal protein S5"/>
    <property type="match status" value="1"/>
</dbReference>
<dbReference type="Gene3D" id="3.30.160.20">
    <property type="match status" value="1"/>
</dbReference>
<dbReference type="Gene3D" id="3.30.230.10">
    <property type="match status" value="1"/>
</dbReference>
<dbReference type="HAMAP" id="MF_01307_B">
    <property type="entry name" value="Ribosomal_uS5_B"/>
    <property type="match status" value="1"/>
</dbReference>
<dbReference type="InterPro" id="IPR020568">
    <property type="entry name" value="Ribosomal_Su5_D2-typ_SF"/>
</dbReference>
<dbReference type="InterPro" id="IPR000851">
    <property type="entry name" value="Ribosomal_uS5"/>
</dbReference>
<dbReference type="InterPro" id="IPR005712">
    <property type="entry name" value="Ribosomal_uS5_bac-type"/>
</dbReference>
<dbReference type="InterPro" id="IPR005324">
    <property type="entry name" value="Ribosomal_uS5_C"/>
</dbReference>
<dbReference type="InterPro" id="IPR013810">
    <property type="entry name" value="Ribosomal_uS5_N"/>
</dbReference>
<dbReference type="InterPro" id="IPR018192">
    <property type="entry name" value="Ribosomal_uS5_N_CS"/>
</dbReference>
<dbReference type="InterPro" id="IPR014721">
    <property type="entry name" value="Ribsml_uS5_D2-typ_fold_subgr"/>
</dbReference>
<dbReference type="NCBIfam" id="TIGR01021">
    <property type="entry name" value="rpsE_bact"/>
    <property type="match status" value="1"/>
</dbReference>
<dbReference type="PANTHER" id="PTHR48277">
    <property type="entry name" value="MITOCHONDRIAL RIBOSOMAL PROTEIN S5"/>
    <property type="match status" value="1"/>
</dbReference>
<dbReference type="PANTHER" id="PTHR48277:SF1">
    <property type="entry name" value="MITOCHONDRIAL RIBOSOMAL PROTEIN S5"/>
    <property type="match status" value="1"/>
</dbReference>
<dbReference type="Pfam" id="PF00333">
    <property type="entry name" value="Ribosomal_S5"/>
    <property type="match status" value="1"/>
</dbReference>
<dbReference type="Pfam" id="PF03719">
    <property type="entry name" value="Ribosomal_S5_C"/>
    <property type="match status" value="1"/>
</dbReference>
<dbReference type="SUPFAM" id="SSF54768">
    <property type="entry name" value="dsRNA-binding domain-like"/>
    <property type="match status" value="1"/>
</dbReference>
<dbReference type="SUPFAM" id="SSF54211">
    <property type="entry name" value="Ribosomal protein S5 domain 2-like"/>
    <property type="match status" value="1"/>
</dbReference>
<dbReference type="PROSITE" id="PS00585">
    <property type="entry name" value="RIBOSOMAL_S5"/>
    <property type="match status" value="1"/>
</dbReference>
<dbReference type="PROSITE" id="PS50881">
    <property type="entry name" value="S5_DSRBD"/>
    <property type="match status" value="1"/>
</dbReference>
<proteinExistence type="inferred from homology"/>
<reference key="1">
    <citation type="journal article" date="2009" name="Genome Res.">
        <title>Newly introduced genomic prophage islands are critical determinants of in vivo competitiveness in the Liverpool epidemic strain of Pseudomonas aeruginosa.</title>
        <authorList>
            <person name="Winstanley C."/>
            <person name="Langille M.G.I."/>
            <person name="Fothergill J.L."/>
            <person name="Kukavica-Ibrulj I."/>
            <person name="Paradis-Bleau C."/>
            <person name="Sanschagrin F."/>
            <person name="Thomson N.R."/>
            <person name="Winsor G.L."/>
            <person name="Quail M.A."/>
            <person name="Lennard N."/>
            <person name="Bignell A."/>
            <person name="Clarke L."/>
            <person name="Seeger K."/>
            <person name="Saunders D."/>
            <person name="Harris D."/>
            <person name="Parkhill J."/>
            <person name="Hancock R.E.W."/>
            <person name="Brinkman F.S.L."/>
            <person name="Levesque R.C."/>
        </authorList>
    </citation>
    <scope>NUCLEOTIDE SEQUENCE [LARGE SCALE GENOMIC DNA]</scope>
    <source>
        <strain>LESB58</strain>
    </source>
</reference>
<name>RS5_PSEA8</name>
<organism>
    <name type="scientific">Pseudomonas aeruginosa (strain LESB58)</name>
    <dbReference type="NCBI Taxonomy" id="557722"/>
    <lineage>
        <taxon>Bacteria</taxon>
        <taxon>Pseudomonadati</taxon>
        <taxon>Pseudomonadota</taxon>
        <taxon>Gammaproteobacteria</taxon>
        <taxon>Pseudomonadales</taxon>
        <taxon>Pseudomonadaceae</taxon>
        <taxon>Pseudomonas</taxon>
    </lineage>
</organism>
<sequence>MANNEQKRDEGYIEKLVQVNRVAKTVKGGRIFAFTALTVVGDGKGRVGFGRGKAREVPAAIQKAMEAARRNMIQVDLNGTTLQYPTKSAHGASKVYMQPASEGTGIIAGGAMRAVLEVAGVQNVLAKCYGSTNPVNVVYATFKGLKNMQAPEAVAAKRGKSVEEIL</sequence>